<evidence type="ECO:0000255" key="1">
    <source>
        <dbReference type="HAMAP-Rule" id="MF_01018"/>
    </source>
</evidence>
<reference key="1">
    <citation type="journal article" date="2005" name="Proc. Natl. Acad. Sci. U.S.A.">
        <title>Comparison of the complete genome sequences of Pseudomonas syringae pv. syringae B728a and pv. tomato DC3000.</title>
        <authorList>
            <person name="Feil H."/>
            <person name="Feil W.S."/>
            <person name="Chain P."/>
            <person name="Larimer F."/>
            <person name="Dibartolo G."/>
            <person name="Copeland A."/>
            <person name="Lykidis A."/>
            <person name="Trong S."/>
            <person name="Nolan M."/>
            <person name="Goltsman E."/>
            <person name="Thiel J."/>
            <person name="Malfatti S."/>
            <person name="Loper J.E."/>
            <person name="Lapidus A."/>
            <person name="Detter J.C."/>
            <person name="Land M."/>
            <person name="Richardson P.M."/>
            <person name="Kyrpides N.C."/>
            <person name="Ivanova N."/>
            <person name="Lindow S.E."/>
        </authorList>
    </citation>
    <scope>NUCLEOTIDE SEQUENCE [LARGE SCALE GENOMIC DNA]</scope>
    <source>
        <strain>B728a</strain>
    </source>
</reference>
<gene>
    <name evidence="1" type="primary">hisG</name>
    <name type="ordered locus">Psyr_4134</name>
</gene>
<protein>
    <recommendedName>
        <fullName evidence="1">ATP phosphoribosyltransferase</fullName>
        <shortName evidence="1">ATP-PRT</shortName>
        <shortName evidence="1">ATP-PRTase</shortName>
        <ecNumber evidence="1">2.4.2.17</ecNumber>
    </recommendedName>
</protein>
<comment type="function">
    <text evidence="1">Catalyzes the condensation of ATP and 5-phosphoribose 1-diphosphate to form N'-(5'-phosphoribosyl)-ATP (PR-ATP). Has a crucial role in the pathway because the rate of histidine biosynthesis seems to be controlled primarily by regulation of HisG enzymatic activity.</text>
</comment>
<comment type="catalytic activity">
    <reaction evidence="1">
        <text>1-(5-phospho-beta-D-ribosyl)-ATP + diphosphate = 5-phospho-alpha-D-ribose 1-diphosphate + ATP</text>
        <dbReference type="Rhea" id="RHEA:18473"/>
        <dbReference type="ChEBI" id="CHEBI:30616"/>
        <dbReference type="ChEBI" id="CHEBI:33019"/>
        <dbReference type="ChEBI" id="CHEBI:58017"/>
        <dbReference type="ChEBI" id="CHEBI:73183"/>
        <dbReference type="EC" id="2.4.2.17"/>
    </reaction>
</comment>
<comment type="pathway">
    <text evidence="1">Amino-acid biosynthesis; L-histidine biosynthesis; L-histidine from 5-phospho-alpha-D-ribose 1-diphosphate: step 1/9.</text>
</comment>
<comment type="subunit">
    <text evidence="1">Heteromultimer composed of HisG and HisZ subunits.</text>
</comment>
<comment type="subcellular location">
    <subcellularLocation>
        <location evidence="1">Cytoplasm</location>
    </subcellularLocation>
</comment>
<comment type="domain">
    <text>Lacks the C-terminal regulatory region which is replaced by HisZ.</text>
</comment>
<comment type="similarity">
    <text evidence="1">Belongs to the ATP phosphoribosyltransferase family. Short subfamily.</text>
</comment>
<accession>Q4ZNV8</accession>
<proteinExistence type="inferred from homology"/>
<dbReference type="EC" id="2.4.2.17" evidence="1"/>
<dbReference type="EMBL" id="CP000075">
    <property type="protein sequence ID" value="AAY39164.1"/>
    <property type="molecule type" value="Genomic_DNA"/>
</dbReference>
<dbReference type="RefSeq" id="WP_005739058.1">
    <property type="nucleotide sequence ID" value="NC_007005.1"/>
</dbReference>
<dbReference type="RefSeq" id="YP_237202.1">
    <property type="nucleotide sequence ID" value="NC_007005.1"/>
</dbReference>
<dbReference type="SMR" id="Q4ZNV8"/>
<dbReference type="STRING" id="205918.Psyr_4134"/>
<dbReference type="GeneID" id="61788149"/>
<dbReference type="KEGG" id="psb:Psyr_4134"/>
<dbReference type="PATRIC" id="fig|205918.7.peg.4254"/>
<dbReference type="eggNOG" id="COG0040">
    <property type="taxonomic scope" value="Bacteria"/>
</dbReference>
<dbReference type="HOGENOM" id="CLU_038115_2_0_6"/>
<dbReference type="OrthoDB" id="9801867at2"/>
<dbReference type="UniPathway" id="UPA00031">
    <property type="reaction ID" value="UER00006"/>
</dbReference>
<dbReference type="Proteomes" id="UP000000426">
    <property type="component" value="Chromosome"/>
</dbReference>
<dbReference type="GO" id="GO:0005737">
    <property type="term" value="C:cytoplasm"/>
    <property type="evidence" value="ECO:0007669"/>
    <property type="project" value="UniProtKB-SubCell"/>
</dbReference>
<dbReference type="GO" id="GO:0005524">
    <property type="term" value="F:ATP binding"/>
    <property type="evidence" value="ECO:0007669"/>
    <property type="project" value="UniProtKB-KW"/>
</dbReference>
<dbReference type="GO" id="GO:0003879">
    <property type="term" value="F:ATP phosphoribosyltransferase activity"/>
    <property type="evidence" value="ECO:0007669"/>
    <property type="project" value="UniProtKB-UniRule"/>
</dbReference>
<dbReference type="GO" id="GO:0000105">
    <property type="term" value="P:L-histidine biosynthetic process"/>
    <property type="evidence" value="ECO:0007669"/>
    <property type="project" value="UniProtKB-UniRule"/>
</dbReference>
<dbReference type="CDD" id="cd13595">
    <property type="entry name" value="PBP2_HisGs"/>
    <property type="match status" value="1"/>
</dbReference>
<dbReference type="FunFam" id="3.40.190.10:FF:000011">
    <property type="entry name" value="ATP phosphoribosyltransferase"/>
    <property type="match status" value="1"/>
</dbReference>
<dbReference type="FunFam" id="3.40.190.10:FF:000022">
    <property type="entry name" value="ATP phosphoribosyltransferase"/>
    <property type="match status" value="1"/>
</dbReference>
<dbReference type="Gene3D" id="3.40.190.10">
    <property type="entry name" value="Periplasmic binding protein-like II"/>
    <property type="match status" value="2"/>
</dbReference>
<dbReference type="HAMAP" id="MF_01018">
    <property type="entry name" value="HisG_Short"/>
    <property type="match status" value="1"/>
</dbReference>
<dbReference type="InterPro" id="IPR013820">
    <property type="entry name" value="ATP_PRibTrfase_cat"/>
</dbReference>
<dbReference type="InterPro" id="IPR018198">
    <property type="entry name" value="ATP_PRibTrfase_CS"/>
</dbReference>
<dbReference type="InterPro" id="IPR001348">
    <property type="entry name" value="ATP_PRibTrfase_HisG"/>
</dbReference>
<dbReference type="InterPro" id="IPR024893">
    <property type="entry name" value="ATP_PRibTrfase_HisG_short"/>
</dbReference>
<dbReference type="NCBIfam" id="TIGR00070">
    <property type="entry name" value="hisG"/>
    <property type="match status" value="1"/>
</dbReference>
<dbReference type="PANTHER" id="PTHR21403:SF8">
    <property type="entry name" value="ATP PHOSPHORIBOSYLTRANSFERASE"/>
    <property type="match status" value="1"/>
</dbReference>
<dbReference type="PANTHER" id="PTHR21403">
    <property type="entry name" value="ATP PHOSPHORIBOSYLTRANSFERASE ATP-PRTASE"/>
    <property type="match status" value="1"/>
</dbReference>
<dbReference type="Pfam" id="PF01634">
    <property type="entry name" value="HisG"/>
    <property type="match status" value="1"/>
</dbReference>
<dbReference type="SUPFAM" id="SSF53850">
    <property type="entry name" value="Periplasmic binding protein-like II"/>
    <property type="match status" value="1"/>
</dbReference>
<dbReference type="PROSITE" id="PS01316">
    <property type="entry name" value="ATP_P_PHORIBOSYLTR"/>
    <property type="match status" value="1"/>
</dbReference>
<feature type="chain" id="PRO_0000229329" description="ATP phosphoribosyltransferase">
    <location>
        <begin position="1"/>
        <end position="211"/>
    </location>
</feature>
<organism>
    <name type="scientific">Pseudomonas syringae pv. syringae (strain B728a)</name>
    <dbReference type="NCBI Taxonomy" id="205918"/>
    <lineage>
        <taxon>Bacteria</taxon>
        <taxon>Pseudomonadati</taxon>
        <taxon>Pseudomonadota</taxon>
        <taxon>Gammaproteobacteria</taxon>
        <taxon>Pseudomonadales</taxon>
        <taxon>Pseudomonadaceae</taxon>
        <taxon>Pseudomonas</taxon>
        <taxon>Pseudomonas syringae</taxon>
    </lineage>
</organism>
<sequence length="211" mass="22995">MLTIALSKGRILDDTLPLLAEAGIVPTENPDKSRKLIIPTTQADVRLLIVRATDVPTYVEHGAADLGVAGKDVLMEYTGQGLYEPLDLQIAKCRLMTAGAIGAVEPKGRLRVATKFVNVAKRYYAEQGRQVDIIKLYGSMELAPLIGLADKIIDVVDTGNTLRANGLEPQELIATISSRLVVNKASMKMQHARIQALIDTLRKAVESRHRS</sequence>
<keyword id="KW-0028">Amino-acid biosynthesis</keyword>
<keyword id="KW-0067">ATP-binding</keyword>
<keyword id="KW-0963">Cytoplasm</keyword>
<keyword id="KW-0328">Glycosyltransferase</keyword>
<keyword id="KW-0368">Histidine biosynthesis</keyword>
<keyword id="KW-0547">Nucleotide-binding</keyword>
<keyword id="KW-0808">Transferase</keyword>
<name>HIS1_PSEU2</name>